<dbReference type="EC" id="3.1.1.4"/>
<dbReference type="SMR" id="P0C932"/>
<dbReference type="GO" id="GO:0005576">
    <property type="term" value="C:extracellular region"/>
    <property type="evidence" value="ECO:0007669"/>
    <property type="project" value="UniProtKB-SubCell"/>
</dbReference>
<dbReference type="GO" id="GO:0005509">
    <property type="term" value="F:calcium ion binding"/>
    <property type="evidence" value="ECO:0007669"/>
    <property type="project" value="InterPro"/>
</dbReference>
<dbReference type="GO" id="GO:0047498">
    <property type="term" value="F:calcium-dependent phospholipase A2 activity"/>
    <property type="evidence" value="ECO:0007669"/>
    <property type="project" value="TreeGrafter"/>
</dbReference>
<dbReference type="GO" id="GO:0004623">
    <property type="term" value="F:phospholipase A2 activity"/>
    <property type="evidence" value="ECO:0000314"/>
    <property type="project" value="CACAO"/>
</dbReference>
<dbReference type="GO" id="GO:0005543">
    <property type="term" value="F:phospholipid binding"/>
    <property type="evidence" value="ECO:0007669"/>
    <property type="project" value="TreeGrafter"/>
</dbReference>
<dbReference type="GO" id="GO:0090729">
    <property type="term" value="F:toxin activity"/>
    <property type="evidence" value="ECO:0007669"/>
    <property type="project" value="UniProtKB-KW"/>
</dbReference>
<dbReference type="GO" id="GO:0050482">
    <property type="term" value="P:arachidonate secretion"/>
    <property type="evidence" value="ECO:0007669"/>
    <property type="project" value="InterPro"/>
</dbReference>
<dbReference type="GO" id="GO:0016042">
    <property type="term" value="P:lipid catabolic process"/>
    <property type="evidence" value="ECO:0007669"/>
    <property type="project" value="UniProtKB-KW"/>
</dbReference>
<dbReference type="GO" id="GO:0042130">
    <property type="term" value="P:negative regulation of T cell proliferation"/>
    <property type="evidence" value="ECO:0007669"/>
    <property type="project" value="TreeGrafter"/>
</dbReference>
<dbReference type="GO" id="GO:0006644">
    <property type="term" value="P:phospholipid metabolic process"/>
    <property type="evidence" value="ECO:0007669"/>
    <property type="project" value="InterPro"/>
</dbReference>
<dbReference type="FunFam" id="1.20.90.10:FF:000022">
    <property type="match status" value="1"/>
</dbReference>
<dbReference type="Gene3D" id="1.20.90.10">
    <property type="entry name" value="Phospholipase A2 domain"/>
    <property type="match status" value="1"/>
</dbReference>
<dbReference type="InterPro" id="IPR001211">
    <property type="entry name" value="PLipase_A2"/>
</dbReference>
<dbReference type="InterPro" id="IPR016090">
    <property type="entry name" value="PLipase_A2_dom"/>
</dbReference>
<dbReference type="InterPro" id="IPR036444">
    <property type="entry name" value="PLipase_A2_dom_sf"/>
</dbReference>
<dbReference type="InterPro" id="IPR033113">
    <property type="entry name" value="PLipase_A2_His_AS"/>
</dbReference>
<dbReference type="PANTHER" id="PTHR11716">
    <property type="entry name" value="PHOSPHOLIPASE A2 FAMILY MEMBER"/>
    <property type="match status" value="1"/>
</dbReference>
<dbReference type="PANTHER" id="PTHR11716:SF9">
    <property type="entry name" value="PHOSPHOLIPASE A2, MEMBRANE ASSOCIATED"/>
    <property type="match status" value="1"/>
</dbReference>
<dbReference type="Pfam" id="PF00068">
    <property type="entry name" value="Phospholip_A2_1"/>
    <property type="match status" value="1"/>
</dbReference>
<dbReference type="PRINTS" id="PR00389">
    <property type="entry name" value="PHPHLIPASEA2"/>
</dbReference>
<dbReference type="SMART" id="SM00085">
    <property type="entry name" value="PA2c"/>
    <property type="match status" value="1"/>
</dbReference>
<dbReference type="SUPFAM" id="SSF48619">
    <property type="entry name" value="Phospholipase A2, PLA2"/>
    <property type="match status" value="1"/>
</dbReference>
<dbReference type="PROSITE" id="PS00118">
    <property type="entry name" value="PA2_HIS"/>
    <property type="match status" value="1"/>
</dbReference>
<feature type="chain" id="PRO_0000370688" description="Acidic phospholipase A2 1">
    <location>
        <begin position="1"/>
        <end position="50" status="greater than"/>
    </location>
</feature>
<feature type="active site" evidence="2 3">
    <location>
        <position position="47"/>
    </location>
</feature>
<feature type="binding site" evidence="1">
    <location>
        <position position="27"/>
    </location>
    <ligand>
        <name>Ca(2+)</name>
        <dbReference type="ChEBI" id="CHEBI:29108"/>
    </ligand>
</feature>
<feature type="binding site" evidence="1">
    <location>
        <position position="29"/>
    </location>
    <ligand>
        <name>Ca(2+)</name>
        <dbReference type="ChEBI" id="CHEBI:29108"/>
    </ligand>
</feature>
<feature type="binding site" evidence="1">
    <location>
        <position position="31"/>
    </location>
    <ligand>
        <name>Ca(2+)</name>
        <dbReference type="ChEBI" id="CHEBI:29108"/>
    </ligand>
</feature>
<feature type="binding site" evidence="1">
    <location>
        <position position="48"/>
    </location>
    <ligand>
        <name>Ca(2+)</name>
        <dbReference type="ChEBI" id="CHEBI:29108"/>
    </ligand>
</feature>
<feature type="disulfide bond" evidence="1">
    <location>
        <begin position="28"/>
        <end position="44"/>
    </location>
</feature>
<feature type="non-terminal residue">
    <location>
        <position position="50"/>
    </location>
</feature>
<keyword id="KW-0106">Calcium</keyword>
<keyword id="KW-0903">Direct protein sequencing</keyword>
<keyword id="KW-1015">Disulfide bond</keyword>
<keyword id="KW-1199">Hemostasis impairing toxin</keyword>
<keyword id="KW-0378">Hydrolase</keyword>
<keyword id="KW-0442">Lipid degradation</keyword>
<keyword id="KW-0443">Lipid metabolism</keyword>
<keyword id="KW-0479">Metal-binding</keyword>
<keyword id="KW-0959">Myotoxin</keyword>
<keyword id="KW-1201">Platelet aggregation inhibiting toxin</keyword>
<keyword id="KW-0964">Secreted</keyword>
<keyword id="KW-0800">Toxin</keyword>
<accession>P0C932</accession>
<comment type="function">
    <text evidence="4 5 6">Snake venom phospholipase A2 (PLA2) that displays a potent enzymatic activity as measured by indirect hemolysis of red blood cells. Is neither lethal when injected into mice nor does it present anticoagulant activity. Displays a moderate inhibitory activity on the aggregation of platelets induced by low levels of ADP, thrombin and arachidonate. In contrast, strongly inhibits platelet aggregation induced by high doses of collagen. Shows myotoxic activity, increases the plasma creatine-kinase activity and induces edema and myonecrosis of mouse skeletal muscles. PLA2 catalyzes the calcium-dependent hydrolysis of the 2-acyl groups in 3-sn-phosphoglycerides.</text>
</comment>
<comment type="catalytic activity">
    <reaction evidence="2 3">
        <text>a 1,2-diacyl-sn-glycero-3-phosphocholine + H2O = a 1-acyl-sn-glycero-3-phosphocholine + a fatty acid + H(+)</text>
        <dbReference type="Rhea" id="RHEA:15801"/>
        <dbReference type="ChEBI" id="CHEBI:15377"/>
        <dbReference type="ChEBI" id="CHEBI:15378"/>
        <dbReference type="ChEBI" id="CHEBI:28868"/>
        <dbReference type="ChEBI" id="CHEBI:57643"/>
        <dbReference type="ChEBI" id="CHEBI:58168"/>
        <dbReference type="EC" id="3.1.1.4"/>
    </reaction>
</comment>
<comment type="cofactor">
    <cofactor evidence="1">
        <name>Ca(2+)</name>
        <dbReference type="ChEBI" id="CHEBI:29108"/>
    </cofactor>
    <text evidence="1">Binds 1 Ca(2+) ion.</text>
</comment>
<comment type="subunit">
    <text evidence="6">Monomer.</text>
</comment>
<comment type="subcellular location">
    <subcellularLocation>
        <location>Secreted</location>
    </subcellularLocation>
</comment>
<comment type="tissue specificity">
    <text>Expressed by the venom gland.</text>
</comment>
<comment type="similarity">
    <text evidence="7">Belongs to the phospholipase A2 family. Group II subfamily. D49 sub-subfamily.</text>
</comment>
<evidence type="ECO:0000250" key="1"/>
<evidence type="ECO:0000255" key="2">
    <source>
        <dbReference type="PROSITE-ProRule" id="PRU10035"/>
    </source>
</evidence>
<evidence type="ECO:0000255" key="3">
    <source>
        <dbReference type="PROSITE-ProRule" id="PRU10036"/>
    </source>
</evidence>
<evidence type="ECO:0000269" key="4">
    <source>
    </source>
</evidence>
<evidence type="ECO:0000269" key="5">
    <source>
    </source>
</evidence>
<evidence type="ECO:0000269" key="6">
    <source>
    </source>
</evidence>
<evidence type="ECO:0000305" key="7"/>
<protein>
    <recommendedName>
        <fullName>Acidic phospholipase A2 1</fullName>
        <shortName>svPLA2</shortName>
        <ecNumber>3.1.1.4</ecNumber>
    </recommendedName>
    <alternativeName>
        <fullName>LM-PLA2-I</fullName>
    </alternativeName>
    <alternativeName>
        <fullName>Phosphatidylcholine 2-acylhydrolase</fullName>
    </alternativeName>
</protein>
<sequence>HLLQFGDLIDKIAGRSGFWYYGFYGCYCGLGGRGRPQDATDRCCFVHDCC</sequence>
<organism>
    <name type="scientific">Lachesis muta muta</name>
    <name type="common">Bushmaster</name>
    <dbReference type="NCBI Taxonomy" id="8753"/>
    <lineage>
        <taxon>Eukaryota</taxon>
        <taxon>Metazoa</taxon>
        <taxon>Chordata</taxon>
        <taxon>Craniata</taxon>
        <taxon>Vertebrata</taxon>
        <taxon>Euteleostomi</taxon>
        <taxon>Lepidosauria</taxon>
        <taxon>Squamata</taxon>
        <taxon>Bifurcata</taxon>
        <taxon>Unidentata</taxon>
        <taxon>Episquamata</taxon>
        <taxon>Toxicofera</taxon>
        <taxon>Serpentes</taxon>
        <taxon>Colubroidea</taxon>
        <taxon>Viperidae</taxon>
        <taxon>Crotalinae</taxon>
        <taxon>Lachesis</taxon>
    </lineage>
</organism>
<name>PA2A1_LACMU</name>
<proteinExistence type="evidence at protein level"/>
<reference key="1">
    <citation type="journal article" date="1997" name="Thromb. Haemost.">
        <title>Mechanism of inhibitory action on platelet activation of a phospholipase A2 isolated from Lachesis muta (Bushmaster) snake venom.</title>
        <authorList>
            <person name="Fuly A.L."/>
            <person name="Machado O.L."/>
            <person name="Alves E.W."/>
            <person name="Carlini C.R."/>
        </authorList>
    </citation>
    <scope>PROTEIN SEQUENCE</scope>
    <scope>FUNCTION</scope>
    <scope>SUBUNIT</scope>
    <source>
        <tissue>Venom</tissue>
    </source>
</reference>
<reference key="2">
    <citation type="journal article" date="2000" name="Toxicon">
        <title>Myotoxic activity of an acidic phospholipase A2 isolated from Lachesis muta (Bushmaster) snake venom.</title>
        <authorList>
            <person name="Fuly A.L."/>
            <person name="Calil-Elias S."/>
            <person name="Zingali R.B."/>
            <person name="Guimaraes J.A."/>
            <person name="Melo P.A."/>
        </authorList>
    </citation>
    <scope>FUNCTION</scope>
    <source>
        <tissue>Venom</tissue>
    </source>
</reference>
<reference key="3">
    <citation type="journal article" date="2002" name="Biochem. Pharmacol.">
        <title>Purification and characterization of a phospholipase A2 isoenzyme isolated from Lachesis muta snake venom.</title>
        <authorList>
            <person name="Fuly A.L."/>
            <person name="de Miranda A.L.P."/>
            <person name="Zingali R.B."/>
            <person name="Guimaraes J.A."/>
        </authorList>
    </citation>
    <scope>FUNCTION</scope>
    <source>
        <tissue>Venom</tissue>
    </source>
</reference>